<accession>A4SUX7</accession>
<evidence type="ECO:0000255" key="1">
    <source>
        <dbReference type="HAMAP-Rule" id="MF_01337"/>
    </source>
</evidence>
<evidence type="ECO:0000305" key="2"/>
<protein>
    <recommendedName>
        <fullName evidence="1">Large ribosomal subunit protein uL18</fullName>
    </recommendedName>
    <alternativeName>
        <fullName evidence="2">50S ribosomal protein L18</fullName>
    </alternativeName>
</protein>
<gene>
    <name evidence="1" type="primary">rplR</name>
    <name type="ordered locus">Pnuc_0069</name>
</gene>
<comment type="function">
    <text evidence="1">This is one of the proteins that bind and probably mediate the attachment of the 5S RNA into the large ribosomal subunit, where it forms part of the central protuberance.</text>
</comment>
<comment type="subunit">
    <text evidence="1">Part of the 50S ribosomal subunit; part of the 5S rRNA/L5/L18/L25 subcomplex. Contacts the 5S and 23S rRNAs.</text>
</comment>
<comment type="similarity">
    <text evidence="1">Belongs to the universal ribosomal protein uL18 family.</text>
</comment>
<dbReference type="EMBL" id="CP000655">
    <property type="protein sequence ID" value="ABP33291.1"/>
    <property type="molecule type" value="Genomic_DNA"/>
</dbReference>
<dbReference type="RefSeq" id="WP_011901916.1">
    <property type="nucleotide sequence ID" value="NC_009379.1"/>
</dbReference>
<dbReference type="SMR" id="A4SUX7"/>
<dbReference type="GeneID" id="31480415"/>
<dbReference type="KEGG" id="pnu:Pnuc_0069"/>
<dbReference type="eggNOG" id="COG0256">
    <property type="taxonomic scope" value="Bacteria"/>
</dbReference>
<dbReference type="HOGENOM" id="CLU_098841_0_1_4"/>
<dbReference type="Proteomes" id="UP000000231">
    <property type="component" value="Chromosome"/>
</dbReference>
<dbReference type="GO" id="GO:0022625">
    <property type="term" value="C:cytosolic large ribosomal subunit"/>
    <property type="evidence" value="ECO:0007669"/>
    <property type="project" value="TreeGrafter"/>
</dbReference>
<dbReference type="GO" id="GO:0008097">
    <property type="term" value="F:5S rRNA binding"/>
    <property type="evidence" value="ECO:0007669"/>
    <property type="project" value="TreeGrafter"/>
</dbReference>
<dbReference type="GO" id="GO:0003735">
    <property type="term" value="F:structural constituent of ribosome"/>
    <property type="evidence" value="ECO:0007669"/>
    <property type="project" value="InterPro"/>
</dbReference>
<dbReference type="GO" id="GO:0006412">
    <property type="term" value="P:translation"/>
    <property type="evidence" value="ECO:0007669"/>
    <property type="project" value="UniProtKB-UniRule"/>
</dbReference>
<dbReference type="CDD" id="cd00432">
    <property type="entry name" value="Ribosomal_L18_L5e"/>
    <property type="match status" value="1"/>
</dbReference>
<dbReference type="FunFam" id="3.30.420.100:FF:000001">
    <property type="entry name" value="50S ribosomal protein L18"/>
    <property type="match status" value="1"/>
</dbReference>
<dbReference type="Gene3D" id="3.30.420.100">
    <property type="match status" value="1"/>
</dbReference>
<dbReference type="HAMAP" id="MF_01337_B">
    <property type="entry name" value="Ribosomal_uL18_B"/>
    <property type="match status" value="1"/>
</dbReference>
<dbReference type="InterPro" id="IPR004389">
    <property type="entry name" value="Ribosomal_uL18_bac-type"/>
</dbReference>
<dbReference type="InterPro" id="IPR005484">
    <property type="entry name" value="Ribosomal_uL18_bac/euk"/>
</dbReference>
<dbReference type="NCBIfam" id="TIGR00060">
    <property type="entry name" value="L18_bact"/>
    <property type="match status" value="1"/>
</dbReference>
<dbReference type="PANTHER" id="PTHR12899">
    <property type="entry name" value="39S RIBOSOMAL PROTEIN L18, MITOCHONDRIAL"/>
    <property type="match status" value="1"/>
</dbReference>
<dbReference type="PANTHER" id="PTHR12899:SF3">
    <property type="entry name" value="LARGE RIBOSOMAL SUBUNIT PROTEIN UL18M"/>
    <property type="match status" value="1"/>
</dbReference>
<dbReference type="Pfam" id="PF00861">
    <property type="entry name" value="Ribosomal_L18p"/>
    <property type="match status" value="1"/>
</dbReference>
<dbReference type="SUPFAM" id="SSF53137">
    <property type="entry name" value="Translational machinery components"/>
    <property type="match status" value="1"/>
</dbReference>
<keyword id="KW-1185">Reference proteome</keyword>
<keyword id="KW-0687">Ribonucleoprotein</keyword>
<keyword id="KW-0689">Ribosomal protein</keyword>
<keyword id="KW-0694">RNA-binding</keyword>
<keyword id="KW-0699">rRNA-binding</keyword>
<organism>
    <name type="scientific">Polynucleobacter asymbioticus (strain DSM 18221 / CIP 109841 / QLW-P1DMWA-1)</name>
    <name type="common">Polynucleobacter necessarius subsp. asymbioticus</name>
    <dbReference type="NCBI Taxonomy" id="312153"/>
    <lineage>
        <taxon>Bacteria</taxon>
        <taxon>Pseudomonadati</taxon>
        <taxon>Pseudomonadota</taxon>
        <taxon>Betaproteobacteria</taxon>
        <taxon>Burkholderiales</taxon>
        <taxon>Burkholderiaceae</taxon>
        <taxon>Polynucleobacter</taxon>
    </lineage>
</organism>
<name>RL18_POLAQ</name>
<feature type="chain" id="PRO_1000086677" description="Large ribosomal subunit protein uL18">
    <location>
        <begin position="1"/>
        <end position="117"/>
    </location>
</feature>
<proteinExistence type="inferred from homology"/>
<sequence length="117" mass="12726">MNKDESRQRRARQTRIRIAEAQANRLTVIRSNTHISAQVYSPCGTKVVAAASTMEKDLRQAIKNGGNAQAAAQIGKLVAERAVKAGVVDVAFDRSGHRYHGRIKALAEAAREAGLKF</sequence>
<reference key="1">
    <citation type="journal article" date="2012" name="Stand. Genomic Sci.">
        <title>Complete genome sequence of Polynucleobacter necessarius subsp. asymbioticus type strain (QLW-P1DMWA-1(T)).</title>
        <authorList>
            <person name="Meincke L."/>
            <person name="Copeland A."/>
            <person name="Lapidus A."/>
            <person name="Lucas S."/>
            <person name="Berry K.W."/>
            <person name="Del Rio T.G."/>
            <person name="Hammon N."/>
            <person name="Dalin E."/>
            <person name="Tice H."/>
            <person name="Pitluck S."/>
            <person name="Richardson P."/>
            <person name="Bruce D."/>
            <person name="Goodwin L."/>
            <person name="Han C."/>
            <person name="Tapia R."/>
            <person name="Detter J.C."/>
            <person name="Schmutz J."/>
            <person name="Brettin T."/>
            <person name="Larimer F."/>
            <person name="Land M."/>
            <person name="Hauser L."/>
            <person name="Kyrpides N.C."/>
            <person name="Ivanova N."/>
            <person name="Goker M."/>
            <person name="Woyke T."/>
            <person name="Wu Q.L."/>
            <person name="Pockl M."/>
            <person name="Hahn M.W."/>
            <person name="Klenk H.P."/>
        </authorList>
    </citation>
    <scope>NUCLEOTIDE SEQUENCE [LARGE SCALE GENOMIC DNA]</scope>
    <source>
        <strain>DSM 18221 / CIP 109841 / QLW-P1DMWA-1</strain>
    </source>
</reference>